<sequence length="413" mass="46276">MAEHSFDVNEVIKDFPILDQKVNGKRLAYLDSTATSQTPVQVLNVLEDYYKRYNSNVHRGVHTLGSLATDGYENARETVRRFINAKYFEEIIFTRGTTASINLVAHSYGDANVEEGDEIVVTEMEHHANIVPWQQLAKRKNATLKFIPMTADGELNIEDIKQTINDKTKIVAIAHISNVLGTINDVKTIAEIAHQHGAIISVDGAQAAPHMKLDMQEMNADFYSFSGHKMLGPTGIGVLFGKRELLQKMEPIEFGGDMIDFVSKYDATWADLPTKFEAGTPLIAQAIGLAEAIRYLERIGFDAIHKYEQELTIYAYEQMSAIEGIEIYGPPKDRRAGVITFNLQDVHPHDVATAVDTEGVAVRAGHHCAQPLMKWLNVSSTARASFYIYNTKEDVDQLINALKQTKEFFSYEF</sequence>
<keyword id="KW-0663">Pyridoxal phosphate</keyword>
<keyword id="KW-0808">Transferase</keyword>
<accession>Q6GIH2</accession>
<comment type="function">
    <text evidence="1">Catalyzes the removal of elemental sulfur and selenium atoms from L-cysteine, L-cystine, L-selenocysteine, and L-selenocystine to produce L-alanine.</text>
</comment>
<comment type="catalytic activity">
    <reaction>
        <text>(sulfur carrier)-H + L-cysteine = (sulfur carrier)-SH + L-alanine</text>
        <dbReference type="Rhea" id="RHEA:43892"/>
        <dbReference type="Rhea" id="RHEA-COMP:14737"/>
        <dbReference type="Rhea" id="RHEA-COMP:14739"/>
        <dbReference type="ChEBI" id="CHEBI:29917"/>
        <dbReference type="ChEBI" id="CHEBI:35235"/>
        <dbReference type="ChEBI" id="CHEBI:57972"/>
        <dbReference type="ChEBI" id="CHEBI:64428"/>
        <dbReference type="EC" id="2.8.1.7"/>
    </reaction>
</comment>
<comment type="cofactor">
    <cofactor evidence="1">
        <name>pyridoxal 5'-phosphate</name>
        <dbReference type="ChEBI" id="CHEBI:597326"/>
    </cofactor>
</comment>
<comment type="similarity">
    <text evidence="2">Belongs to the class-V pyridoxal-phosphate-dependent aminotransferase family. Csd subfamily.</text>
</comment>
<dbReference type="EC" id="2.8.1.7"/>
<dbReference type="EMBL" id="BX571856">
    <property type="protein sequence ID" value="CAG39884.1"/>
    <property type="molecule type" value="Genomic_DNA"/>
</dbReference>
<dbReference type="SMR" id="Q6GIH2"/>
<dbReference type="KEGG" id="sar:SAR0878"/>
<dbReference type="HOGENOM" id="CLU_003433_2_5_9"/>
<dbReference type="Proteomes" id="UP000000596">
    <property type="component" value="Chromosome"/>
</dbReference>
<dbReference type="GO" id="GO:0031071">
    <property type="term" value="F:cysteine desulfurase activity"/>
    <property type="evidence" value="ECO:0007669"/>
    <property type="project" value="UniProtKB-EC"/>
</dbReference>
<dbReference type="GO" id="GO:0030170">
    <property type="term" value="F:pyridoxal phosphate binding"/>
    <property type="evidence" value="ECO:0007669"/>
    <property type="project" value="InterPro"/>
</dbReference>
<dbReference type="GO" id="GO:0006534">
    <property type="term" value="P:cysteine metabolic process"/>
    <property type="evidence" value="ECO:0007669"/>
    <property type="project" value="InterPro"/>
</dbReference>
<dbReference type="CDD" id="cd06453">
    <property type="entry name" value="SufS_like"/>
    <property type="match status" value="1"/>
</dbReference>
<dbReference type="Gene3D" id="3.90.1150.10">
    <property type="entry name" value="Aspartate Aminotransferase, domain 1"/>
    <property type="match status" value="1"/>
</dbReference>
<dbReference type="Gene3D" id="3.40.640.10">
    <property type="entry name" value="Type I PLP-dependent aspartate aminotransferase-like (Major domain)"/>
    <property type="match status" value="1"/>
</dbReference>
<dbReference type="InterPro" id="IPR000192">
    <property type="entry name" value="Aminotrans_V_dom"/>
</dbReference>
<dbReference type="InterPro" id="IPR010970">
    <property type="entry name" value="Cys_dSase_SufS"/>
</dbReference>
<dbReference type="InterPro" id="IPR016454">
    <property type="entry name" value="Cysteine_dSase"/>
</dbReference>
<dbReference type="InterPro" id="IPR015424">
    <property type="entry name" value="PyrdxlP-dep_Trfase"/>
</dbReference>
<dbReference type="InterPro" id="IPR015421">
    <property type="entry name" value="PyrdxlP-dep_Trfase_major"/>
</dbReference>
<dbReference type="InterPro" id="IPR015422">
    <property type="entry name" value="PyrdxlP-dep_Trfase_small"/>
</dbReference>
<dbReference type="NCBIfam" id="TIGR01979">
    <property type="entry name" value="sufS"/>
    <property type="match status" value="1"/>
</dbReference>
<dbReference type="PANTHER" id="PTHR43586">
    <property type="entry name" value="CYSTEINE DESULFURASE"/>
    <property type="match status" value="1"/>
</dbReference>
<dbReference type="PANTHER" id="PTHR43586:SF8">
    <property type="entry name" value="CYSTEINE DESULFURASE 1, CHLOROPLASTIC"/>
    <property type="match status" value="1"/>
</dbReference>
<dbReference type="Pfam" id="PF00266">
    <property type="entry name" value="Aminotran_5"/>
    <property type="match status" value="1"/>
</dbReference>
<dbReference type="PIRSF" id="PIRSF005572">
    <property type="entry name" value="NifS"/>
    <property type="match status" value="1"/>
</dbReference>
<dbReference type="SUPFAM" id="SSF53383">
    <property type="entry name" value="PLP-dependent transferases"/>
    <property type="match status" value="1"/>
</dbReference>
<feature type="chain" id="PRO_0000150312" description="Probable cysteine desulfurase">
    <location>
        <begin position="1"/>
        <end position="413"/>
    </location>
</feature>
<feature type="active site" description="Cysteine persulfide intermediate" evidence="1">
    <location>
        <position position="368"/>
    </location>
</feature>
<feature type="modified residue" description="N6-(pyridoxal phosphate)lysine" evidence="1">
    <location>
        <position position="229"/>
    </location>
</feature>
<proteinExistence type="inferred from homology"/>
<reference key="1">
    <citation type="journal article" date="2004" name="Proc. Natl. Acad. Sci. U.S.A.">
        <title>Complete genomes of two clinical Staphylococcus aureus strains: evidence for the rapid evolution of virulence and drug resistance.</title>
        <authorList>
            <person name="Holden M.T.G."/>
            <person name="Feil E.J."/>
            <person name="Lindsay J.A."/>
            <person name="Peacock S.J."/>
            <person name="Day N.P.J."/>
            <person name="Enright M.C."/>
            <person name="Foster T.J."/>
            <person name="Moore C.E."/>
            <person name="Hurst L."/>
            <person name="Atkin R."/>
            <person name="Barron A."/>
            <person name="Bason N."/>
            <person name="Bentley S.D."/>
            <person name="Chillingworth C."/>
            <person name="Chillingworth T."/>
            <person name="Churcher C."/>
            <person name="Clark L."/>
            <person name="Corton C."/>
            <person name="Cronin A."/>
            <person name="Doggett J."/>
            <person name="Dowd L."/>
            <person name="Feltwell T."/>
            <person name="Hance Z."/>
            <person name="Harris B."/>
            <person name="Hauser H."/>
            <person name="Holroyd S."/>
            <person name="Jagels K."/>
            <person name="James K.D."/>
            <person name="Lennard N."/>
            <person name="Line A."/>
            <person name="Mayes R."/>
            <person name="Moule S."/>
            <person name="Mungall K."/>
            <person name="Ormond D."/>
            <person name="Quail M.A."/>
            <person name="Rabbinowitsch E."/>
            <person name="Rutherford K.M."/>
            <person name="Sanders M."/>
            <person name="Sharp S."/>
            <person name="Simmonds M."/>
            <person name="Stevens K."/>
            <person name="Whitehead S."/>
            <person name="Barrell B.G."/>
            <person name="Spratt B.G."/>
            <person name="Parkhill J."/>
        </authorList>
    </citation>
    <scope>NUCLEOTIDE SEQUENCE [LARGE SCALE GENOMIC DNA]</scope>
    <source>
        <strain>MRSA252</strain>
    </source>
</reference>
<gene>
    <name type="primary">csd</name>
    <name type="ordered locus">SAR0878</name>
</gene>
<name>CSD_STAAR</name>
<protein>
    <recommendedName>
        <fullName>Probable cysteine desulfurase</fullName>
        <ecNumber>2.8.1.7</ecNumber>
    </recommendedName>
</protein>
<evidence type="ECO:0000250" key="1"/>
<evidence type="ECO:0000305" key="2"/>
<organism>
    <name type="scientific">Staphylococcus aureus (strain MRSA252)</name>
    <dbReference type="NCBI Taxonomy" id="282458"/>
    <lineage>
        <taxon>Bacteria</taxon>
        <taxon>Bacillati</taxon>
        <taxon>Bacillota</taxon>
        <taxon>Bacilli</taxon>
        <taxon>Bacillales</taxon>
        <taxon>Staphylococcaceae</taxon>
        <taxon>Staphylococcus</taxon>
    </lineage>
</organism>